<feature type="chain" id="PRO_0000131020" description="Small ribosomal subunit protein uS14">
    <location>
        <begin position="1"/>
        <end position="56"/>
    </location>
</feature>
<feature type="binding site" evidence="1">
    <location>
        <position position="21"/>
    </location>
    <ligand>
        <name>Zn(2+)</name>
        <dbReference type="ChEBI" id="CHEBI:29105"/>
    </ligand>
</feature>
<feature type="binding site" evidence="1">
    <location>
        <position position="24"/>
    </location>
    <ligand>
        <name>Zn(2+)</name>
        <dbReference type="ChEBI" id="CHEBI:29105"/>
    </ligand>
</feature>
<feature type="binding site" evidence="1">
    <location>
        <position position="39"/>
    </location>
    <ligand>
        <name>Zn(2+)</name>
        <dbReference type="ChEBI" id="CHEBI:29105"/>
    </ligand>
</feature>
<feature type="binding site" evidence="1">
    <location>
        <position position="42"/>
    </location>
    <ligand>
        <name>Zn(2+)</name>
        <dbReference type="ChEBI" id="CHEBI:29105"/>
    </ligand>
</feature>
<feature type="modified residue" description="Phosphoserine" evidence="1">
    <location>
        <position position="9"/>
    </location>
</feature>
<feature type="modified residue" description="Omega-N-methylarginine" evidence="7">
    <location>
        <position position="12"/>
    </location>
</feature>
<feature type="modified residue" description="N6-acetyllysine" evidence="1">
    <location>
        <position position="48"/>
    </location>
</feature>
<proteinExistence type="evidence at protein level"/>
<organism>
    <name type="scientific">Mus musculus</name>
    <name type="common">Mouse</name>
    <dbReference type="NCBI Taxonomy" id="10090"/>
    <lineage>
        <taxon>Eukaryota</taxon>
        <taxon>Metazoa</taxon>
        <taxon>Chordata</taxon>
        <taxon>Craniata</taxon>
        <taxon>Vertebrata</taxon>
        <taxon>Euteleostomi</taxon>
        <taxon>Mammalia</taxon>
        <taxon>Eutheria</taxon>
        <taxon>Euarchontoglires</taxon>
        <taxon>Glires</taxon>
        <taxon>Rodentia</taxon>
        <taxon>Myomorpha</taxon>
        <taxon>Muroidea</taxon>
        <taxon>Muridae</taxon>
        <taxon>Murinae</taxon>
        <taxon>Mus</taxon>
        <taxon>Mus</taxon>
    </lineage>
</organism>
<keyword id="KW-0002">3D-structure</keyword>
<keyword id="KW-0007">Acetylation</keyword>
<keyword id="KW-0963">Cytoplasm</keyword>
<keyword id="KW-0256">Endoplasmic reticulum</keyword>
<keyword id="KW-0479">Metal-binding</keyword>
<keyword id="KW-0488">Methylation</keyword>
<keyword id="KW-0597">Phosphoprotein</keyword>
<keyword id="KW-1185">Reference proteome</keyword>
<keyword id="KW-0687">Ribonucleoprotein</keyword>
<keyword id="KW-0689">Ribosomal protein</keyword>
<keyword id="KW-0862">Zinc</keyword>
<comment type="function">
    <text evidence="3">Component of the small ribosomal subunit (PubMed:36517592). The ribosome is a large ribonucleoprotein complex responsible for the synthesis of proteins in the cell (PubMed:36517592).</text>
</comment>
<comment type="cofactor">
    <cofactor evidence="1">
        <name>Zn(2+)</name>
        <dbReference type="ChEBI" id="CHEBI:29105"/>
    </cofactor>
    <text evidence="1">Binds 1 zinc ion per subunit.</text>
</comment>
<comment type="subunit">
    <text evidence="3">Component of the 40S small ribosomal subunit.</text>
</comment>
<comment type="subcellular location">
    <subcellularLocation>
        <location evidence="1">Cytoplasm</location>
        <location evidence="1">Cytosol</location>
    </subcellularLocation>
    <subcellularLocation>
        <location evidence="3">Cytoplasm</location>
    </subcellularLocation>
    <subcellularLocation>
        <location evidence="2">Rough endoplasmic reticulum</location>
    </subcellularLocation>
    <text evidence="1 2">Detected on cytosolic polysomes (By similarity). Detected in ribosomes that are associated with the rough endoplasmic reticulum (By similarity).</text>
</comment>
<comment type="similarity">
    <text evidence="4">Belongs to the universal ribosomal protein uS14 family.</text>
</comment>
<protein>
    <recommendedName>
        <fullName evidence="4">Small ribosomal subunit protein uS14</fullName>
    </recommendedName>
    <alternativeName>
        <fullName>40S ribosomal protein S29</fullName>
    </alternativeName>
</protein>
<gene>
    <name type="primary">Rps29</name>
</gene>
<evidence type="ECO:0000250" key="1">
    <source>
        <dbReference type="UniProtKB" id="P62273"/>
    </source>
</evidence>
<evidence type="ECO:0000250" key="2">
    <source>
        <dbReference type="UniProtKB" id="Q6QAP6"/>
    </source>
</evidence>
<evidence type="ECO:0000269" key="3">
    <source>
    </source>
</evidence>
<evidence type="ECO:0000305" key="4"/>
<evidence type="ECO:0007744" key="5">
    <source>
        <dbReference type="PDB" id="7CPU"/>
    </source>
</evidence>
<evidence type="ECO:0007744" key="6">
    <source>
        <dbReference type="PDB" id="7CPV"/>
    </source>
</evidence>
<evidence type="ECO:0007744" key="7">
    <source>
    </source>
</evidence>
<dbReference type="EMBL" id="L31609">
    <property type="protein sequence ID" value="AAB27429.1"/>
    <property type="molecule type" value="mRNA"/>
</dbReference>
<dbReference type="EMBL" id="AK002939">
    <property type="protein sequence ID" value="BAB22469.1"/>
    <property type="molecule type" value="mRNA"/>
</dbReference>
<dbReference type="EMBL" id="AK012285">
    <property type="protein sequence ID" value="BAB28143.1"/>
    <property type="molecule type" value="mRNA"/>
</dbReference>
<dbReference type="EMBL" id="BC024393">
    <property type="protein sequence ID" value="AAH24393.1"/>
    <property type="molecule type" value="mRNA"/>
</dbReference>
<dbReference type="EMBL" id="BC051203">
    <property type="protein sequence ID" value="AAH51203.1"/>
    <property type="molecule type" value="mRNA"/>
</dbReference>
<dbReference type="CCDS" id="CCDS36461.1"/>
<dbReference type="PIR" id="S71578">
    <property type="entry name" value="S71578"/>
</dbReference>
<dbReference type="RefSeq" id="NP_033119.1">
    <property type="nucleotide sequence ID" value="NM_009093.3"/>
</dbReference>
<dbReference type="PDB" id="7CPU">
    <property type="method" value="EM"/>
    <property type="resolution" value="2.82 A"/>
    <property type="chains" value="Sd=1-56"/>
</dbReference>
<dbReference type="PDB" id="7CPV">
    <property type="method" value="EM"/>
    <property type="resolution" value="3.03 A"/>
    <property type="chains" value="Sd=1-56"/>
</dbReference>
<dbReference type="PDB" id="7LS1">
    <property type="method" value="EM"/>
    <property type="resolution" value="3.30 A"/>
    <property type="chains" value="H3=1-56"/>
</dbReference>
<dbReference type="PDB" id="7LS2">
    <property type="method" value="EM"/>
    <property type="resolution" value="3.10 A"/>
    <property type="chains" value="H3=1-56"/>
</dbReference>
<dbReference type="PDBsum" id="7CPU"/>
<dbReference type="PDBsum" id="7CPV"/>
<dbReference type="PDBsum" id="7LS1"/>
<dbReference type="PDBsum" id="7LS2"/>
<dbReference type="EMDB" id="EMD-23500"/>
<dbReference type="EMDB" id="EMD-23501"/>
<dbReference type="EMDB" id="EMD-30432"/>
<dbReference type="EMDB" id="EMD-30433"/>
<dbReference type="SMR" id="P62274"/>
<dbReference type="BioGRID" id="203009">
    <property type="interactions" value="7"/>
</dbReference>
<dbReference type="ComplexPortal" id="CPX-5261">
    <property type="entry name" value="40S cytosolic small ribosomal subunit"/>
</dbReference>
<dbReference type="FunCoup" id="P62274">
    <property type="interactions" value="1729"/>
</dbReference>
<dbReference type="IntAct" id="P62274">
    <property type="interactions" value="2"/>
</dbReference>
<dbReference type="STRING" id="10090.ENSMUSP00000038352"/>
<dbReference type="GlyGen" id="P62274">
    <property type="glycosylation" value="1 site, 1 O-linked glycan (1 site)"/>
</dbReference>
<dbReference type="iPTMnet" id="P62274"/>
<dbReference type="PhosphoSitePlus" id="P62274"/>
<dbReference type="SwissPalm" id="P62274"/>
<dbReference type="jPOST" id="P62274"/>
<dbReference type="PaxDb" id="10090-ENSMUSP00000038352"/>
<dbReference type="PeptideAtlas" id="P62274"/>
<dbReference type="ProteomicsDB" id="260856"/>
<dbReference type="Pumba" id="P62274"/>
<dbReference type="DNASU" id="20090"/>
<dbReference type="Ensembl" id="ENSMUST00000037023.9">
    <property type="protein sequence ID" value="ENSMUSP00000038352.9"/>
    <property type="gene ID" value="ENSMUSG00000034892.9"/>
</dbReference>
<dbReference type="GeneID" id="20090"/>
<dbReference type="KEGG" id="mmu:20090"/>
<dbReference type="UCSC" id="uc007nrp.2">
    <property type="organism name" value="mouse"/>
</dbReference>
<dbReference type="AGR" id="MGI:107681"/>
<dbReference type="CTD" id="6235"/>
<dbReference type="MGI" id="MGI:107681">
    <property type="gene designation" value="Rps29"/>
</dbReference>
<dbReference type="VEuPathDB" id="HostDB:ENSMUSG00000034892"/>
<dbReference type="eggNOG" id="KOG3506">
    <property type="taxonomic scope" value="Eukaryota"/>
</dbReference>
<dbReference type="GeneTree" id="ENSGT00940000154720"/>
<dbReference type="HOGENOM" id="CLU_177289_1_1_1"/>
<dbReference type="InParanoid" id="P62274"/>
<dbReference type="OMA" id="HCFREIA"/>
<dbReference type="OrthoDB" id="10252683at2759"/>
<dbReference type="PhylomeDB" id="P62274"/>
<dbReference type="TreeFam" id="TF300217"/>
<dbReference type="Reactome" id="R-MMU-156827">
    <property type="pathway name" value="L13a-mediated translational silencing of Ceruloplasmin expression"/>
</dbReference>
<dbReference type="Reactome" id="R-MMU-1799339">
    <property type="pathway name" value="SRP-dependent cotranslational protein targeting to membrane"/>
</dbReference>
<dbReference type="Reactome" id="R-MMU-6791226">
    <property type="pathway name" value="Major pathway of rRNA processing in the nucleolus and cytosol"/>
</dbReference>
<dbReference type="Reactome" id="R-MMU-72649">
    <property type="pathway name" value="Translation initiation complex formation"/>
</dbReference>
<dbReference type="Reactome" id="R-MMU-72689">
    <property type="pathway name" value="Formation of a pool of free 40S subunits"/>
</dbReference>
<dbReference type="Reactome" id="R-MMU-72695">
    <property type="pathway name" value="Formation of the ternary complex, and subsequently, the 43S complex"/>
</dbReference>
<dbReference type="Reactome" id="R-MMU-72702">
    <property type="pathway name" value="Ribosomal scanning and start codon recognition"/>
</dbReference>
<dbReference type="Reactome" id="R-MMU-72706">
    <property type="pathway name" value="GTP hydrolysis and joining of the 60S ribosomal subunit"/>
</dbReference>
<dbReference type="Reactome" id="R-MMU-975956">
    <property type="pathway name" value="Nonsense Mediated Decay (NMD) independent of the Exon Junction Complex (EJC)"/>
</dbReference>
<dbReference type="Reactome" id="R-MMU-975957">
    <property type="pathway name" value="Nonsense Mediated Decay (NMD) enhanced by the Exon Junction Complex (EJC)"/>
</dbReference>
<dbReference type="BioGRID-ORCS" id="20090">
    <property type="hits" value="30 hits in 63 CRISPR screens"/>
</dbReference>
<dbReference type="ChiTaRS" id="Rps29">
    <property type="organism name" value="mouse"/>
</dbReference>
<dbReference type="PRO" id="PR:P62274"/>
<dbReference type="Proteomes" id="UP000000589">
    <property type="component" value="Chromosome 12"/>
</dbReference>
<dbReference type="RNAct" id="P62274">
    <property type="molecule type" value="protein"/>
</dbReference>
<dbReference type="Bgee" id="ENSMUSG00000034892">
    <property type="expression patterns" value="Expressed in mesodermal cell in embryo and 64 other cell types or tissues"/>
</dbReference>
<dbReference type="GO" id="GO:0005737">
    <property type="term" value="C:cytoplasm"/>
    <property type="evidence" value="ECO:0000303"/>
    <property type="project" value="ComplexPortal"/>
</dbReference>
<dbReference type="GO" id="GO:0098556">
    <property type="term" value="C:cytoplasmic side of rough endoplasmic reticulum membrane"/>
    <property type="evidence" value="ECO:0000250"/>
    <property type="project" value="UniProtKB"/>
</dbReference>
<dbReference type="GO" id="GO:0005829">
    <property type="term" value="C:cytosol"/>
    <property type="evidence" value="ECO:0000304"/>
    <property type="project" value="Reactome"/>
</dbReference>
<dbReference type="GO" id="GO:0022627">
    <property type="term" value="C:cytosolic small ribosomal subunit"/>
    <property type="evidence" value="ECO:0000314"/>
    <property type="project" value="UniProtKB"/>
</dbReference>
<dbReference type="GO" id="GO:0005840">
    <property type="term" value="C:ribosome"/>
    <property type="evidence" value="ECO:0000250"/>
    <property type="project" value="UniProtKB"/>
</dbReference>
<dbReference type="GO" id="GO:0003735">
    <property type="term" value="F:structural constituent of ribosome"/>
    <property type="evidence" value="ECO:0000314"/>
    <property type="project" value="UniProtKB"/>
</dbReference>
<dbReference type="GO" id="GO:0008270">
    <property type="term" value="F:zinc ion binding"/>
    <property type="evidence" value="ECO:0000250"/>
    <property type="project" value="UniProtKB"/>
</dbReference>
<dbReference type="GO" id="GO:0002181">
    <property type="term" value="P:cytoplasmic translation"/>
    <property type="evidence" value="ECO:0000250"/>
    <property type="project" value="UniProtKB"/>
</dbReference>
<dbReference type="GO" id="GO:0006412">
    <property type="term" value="P:translation"/>
    <property type="evidence" value="ECO:0000266"/>
    <property type="project" value="MGI"/>
</dbReference>
<dbReference type="FunFam" id="4.10.830.10:FF:000002">
    <property type="entry name" value="40S ribosomal protein S29"/>
    <property type="match status" value="1"/>
</dbReference>
<dbReference type="Gene3D" id="4.10.830.10">
    <property type="entry name" value="30s Ribosomal Protein S14, Chain N"/>
    <property type="match status" value="1"/>
</dbReference>
<dbReference type="InterPro" id="IPR001209">
    <property type="entry name" value="Ribosomal_uS14"/>
</dbReference>
<dbReference type="InterPro" id="IPR018271">
    <property type="entry name" value="Ribosomal_uS14_CS"/>
</dbReference>
<dbReference type="InterPro" id="IPR039744">
    <property type="entry name" value="RIbosomal_uS14_euk_arc"/>
</dbReference>
<dbReference type="InterPro" id="IPR043140">
    <property type="entry name" value="Ribosomal_uS14_sf"/>
</dbReference>
<dbReference type="NCBIfam" id="NF004424">
    <property type="entry name" value="PRK05766.1"/>
    <property type="match status" value="1"/>
</dbReference>
<dbReference type="PANTHER" id="PTHR12010">
    <property type="entry name" value="40S RIBOSOMAL PROTEIN S29"/>
    <property type="match status" value="1"/>
</dbReference>
<dbReference type="PANTHER" id="PTHR12010:SF26">
    <property type="entry name" value="SMALL RIBOSOMAL SUBUNIT PROTEIN US14"/>
    <property type="match status" value="1"/>
</dbReference>
<dbReference type="Pfam" id="PF00253">
    <property type="entry name" value="Ribosomal_S14"/>
    <property type="match status" value="1"/>
</dbReference>
<dbReference type="PROSITE" id="PS00527">
    <property type="entry name" value="RIBOSOMAL_S14"/>
    <property type="match status" value="1"/>
</dbReference>
<reference key="1">
    <citation type="journal article" date="1996" name="Biochim. Biophys. Acta">
        <title>The S29 ribosomal protein increases tumor suppressor activity of K rev-1 gene on v-K ras-transformed NIH3T3 cells.</title>
        <authorList>
            <person name="Kondoh N."/>
            <person name="Noda M."/>
            <person name="Fisher R.J."/>
            <person name="Schweinfest C.W."/>
            <person name="Papas T.S."/>
            <person name="Kondoh A."/>
            <person name="Samuel K.P."/>
            <person name="Oikawa T."/>
        </authorList>
    </citation>
    <scope>NUCLEOTIDE SEQUENCE [MRNA]</scope>
    <source>
        <strain>BALB/cJ</strain>
    </source>
</reference>
<reference key="2">
    <citation type="journal article" date="2005" name="Science">
        <title>The transcriptional landscape of the mammalian genome.</title>
        <authorList>
            <person name="Carninci P."/>
            <person name="Kasukawa T."/>
            <person name="Katayama S."/>
            <person name="Gough J."/>
            <person name="Frith M.C."/>
            <person name="Maeda N."/>
            <person name="Oyama R."/>
            <person name="Ravasi T."/>
            <person name="Lenhard B."/>
            <person name="Wells C."/>
            <person name="Kodzius R."/>
            <person name="Shimokawa K."/>
            <person name="Bajic V.B."/>
            <person name="Brenner S.E."/>
            <person name="Batalov S."/>
            <person name="Forrest A.R."/>
            <person name="Zavolan M."/>
            <person name="Davis M.J."/>
            <person name="Wilming L.G."/>
            <person name="Aidinis V."/>
            <person name="Allen J.E."/>
            <person name="Ambesi-Impiombato A."/>
            <person name="Apweiler R."/>
            <person name="Aturaliya R.N."/>
            <person name="Bailey T.L."/>
            <person name="Bansal M."/>
            <person name="Baxter L."/>
            <person name="Beisel K.W."/>
            <person name="Bersano T."/>
            <person name="Bono H."/>
            <person name="Chalk A.M."/>
            <person name="Chiu K.P."/>
            <person name="Choudhary V."/>
            <person name="Christoffels A."/>
            <person name="Clutterbuck D.R."/>
            <person name="Crowe M.L."/>
            <person name="Dalla E."/>
            <person name="Dalrymple B.P."/>
            <person name="de Bono B."/>
            <person name="Della Gatta G."/>
            <person name="di Bernardo D."/>
            <person name="Down T."/>
            <person name="Engstrom P."/>
            <person name="Fagiolini M."/>
            <person name="Faulkner G."/>
            <person name="Fletcher C.F."/>
            <person name="Fukushima T."/>
            <person name="Furuno M."/>
            <person name="Futaki S."/>
            <person name="Gariboldi M."/>
            <person name="Georgii-Hemming P."/>
            <person name="Gingeras T.R."/>
            <person name="Gojobori T."/>
            <person name="Green R.E."/>
            <person name="Gustincich S."/>
            <person name="Harbers M."/>
            <person name="Hayashi Y."/>
            <person name="Hensch T.K."/>
            <person name="Hirokawa N."/>
            <person name="Hill D."/>
            <person name="Huminiecki L."/>
            <person name="Iacono M."/>
            <person name="Ikeo K."/>
            <person name="Iwama A."/>
            <person name="Ishikawa T."/>
            <person name="Jakt M."/>
            <person name="Kanapin A."/>
            <person name="Katoh M."/>
            <person name="Kawasawa Y."/>
            <person name="Kelso J."/>
            <person name="Kitamura H."/>
            <person name="Kitano H."/>
            <person name="Kollias G."/>
            <person name="Krishnan S.P."/>
            <person name="Kruger A."/>
            <person name="Kummerfeld S.K."/>
            <person name="Kurochkin I.V."/>
            <person name="Lareau L.F."/>
            <person name="Lazarevic D."/>
            <person name="Lipovich L."/>
            <person name="Liu J."/>
            <person name="Liuni S."/>
            <person name="McWilliam S."/>
            <person name="Madan Babu M."/>
            <person name="Madera M."/>
            <person name="Marchionni L."/>
            <person name="Matsuda H."/>
            <person name="Matsuzawa S."/>
            <person name="Miki H."/>
            <person name="Mignone F."/>
            <person name="Miyake S."/>
            <person name="Morris K."/>
            <person name="Mottagui-Tabar S."/>
            <person name="Mulder N."/>
            <person name="Nakano N."/>
            <person name="Nakauchi H."/>
            <person name="Ng P."/>
            <person name="Nilsson R."/>
            <person name="Nishiguchi S."/>
            <person name="Nishikawa S."/>
            <person name="Nori F."/>
            <person name="Ohara O."/>
            <person name="Okazaki Y."/>
            <person name="Orlando V."/>
            <person name="Pang K.C."/>
            <person name="Pavan W.J."/>
            <person name="Pavesi G."/>
            <person name="Pesole G."/>
            <person name="Petrovsky N."/>
            <person name="Piazza S."/>
            <person name="Reed J."/>
            <person name="Reid J.F."/>
            <person name="Ring B.Z."/>
            <person name="Ringwald M."/>
            <person name="Rost B."/>
            <person name="Ruan Y."/>
            <person name="Salzberg S.L."/>
            <person name="Sandelin A."/>
            <person name="Schneider C."/>
            <person name="Schoenbach C."/>
            <person name="Sekiguchi K."/>
            <person name="Semple C.A."/>
            <person name="Seno S."/>
            <person name="Sessa L."/>
            <person name="Sheng Y."/>
            <person name="Shibata Y."/>
            <person name="Shimada H."/>
            <person name="Shimada K."/>
            <person name="Silva D."/>
            <person name="Sinclair B."/>
            <person name="Sperling S."/>
            <person name="Stupka E."/>
            <person name="Sugiura K."/>
            <person name="Sultana R."/>
            <person name="Takenaka Y."/>
            <person name="Taki K."/>
            <person name="Tammoja K."/>
            <person name="Tan S.L."/>
            <person name="Tang S."/>
            <person name="Taylor M.S."/>
            <person name="Tegner J."/>
            <person name="Teichmann S.A."/>
            <person name="Ueda H.R."/>
            <person name="van Nimwegen E."/>
            <person name="Verardo R."/>
            <person name="Wei C.L."/>
            <person name="Yagi K."/>
            <person name="Yamanishi H."/>
            <person name="Zabarovsky E."/>
            <person name="Zhu S."/>
            <person name="Zimmer A."/>
            <person name="Hide W."/>
            <person name="Bult C."/>
            <person name="Grimmond S.M."/>
            <person name="Teasdale R.D."/>
            <person name="Liu E.T."/>
            <person name="Brusic V."/>
            <person name="Quackenbush J."/>
            <person name="Wahlestedt C."/>
            <person name="Mattick J.S."/>
            <person name="Hume D.A."/>
            <person name="Kai C."/>
            <person name="Sasaki D."/>
            <person name="Tomaru Y."/>
            <person name="Fukuda S."/>
            <person name="Kanamori-Katayama M."/>
            <person name="Suzuki M."/>
            <person name="Aoki J."/>
            <person name="Arakawa T."/>
            <person name="Iida J."/>
            <person name="Imamura K."/>
            <person name="Itoh M."/>
            <person name="Kato T."/>
            <person name="Kawaji H."/>
            <person name="Kawagashira N."/>
            <person name="Kawashima T."/>
            <person name="Kojima M."/>
            <person name="Kondo S."/>
            <person name="Konno H."/>
            <person name="Nakano K."/>
            <person name="Ninomiya N."/>
            <person name="Nishio T."/>
            <person name="Okada M."/>
            <person name="Plessy C."/>
            <person name="Shibata K."/>
            <person name="Shiraki T."/>
            <person name="Suzuki S."/>
            <person name="Tagami M."/>
            <person name="Waki K."/>
            <person name="Watahiki A."/>
            <person name="Okamura-Oho Y."/>
            <person name="Suzuki H."/>
            <person name="Kawai J."/>
            <person name="Hayashizaki Y."/>
        </authorList>
    </citation>
    <scope>NUCLEOTIDE SEQUENCE [LARGE SCALE MRNA]</scope>
    <source>
        <strain>C57BL/6J</strain>
        <tissue>Brain</tissue>
    </source>
</reference>
<reference key="3">
    <citation type="journal article" date="2004" name="Genome Res.">
        <title>The status, quality, and expansion of the NIH full-length cDNA project: the Mammalian Gene Collection (MGC).</title>
        <authorList>
            <consortium name="The MGC Project Team"/>
        </authorList>
    </citation>
    <scope>NUCLEOTIDE SEQUENCE [LARGE SCALE MRNA]</scope>
    <source>
        <tissue>Colon</tissue>
        <tissue>Mammary gland</tissue>
    </source>
</reference>
<reference key="4">
    <citation type="journal article" date="2014" name="Mol. Cell. Proteomics">
        <title>Immunoaffinity enrichment and mass spectrometry analysis of protein methylation.</title>
        <authorList>
            <person name="Guo A."/>
            <person name="Gu H."/>
            <person name="Zhou J."/>
            <person name="Mulhern D."/>
            <person name="Wang Y."/>
            <person name="Lee K.A."/>
            <person name="Yang V."/>
            <person name="Aguiar M."/>
            <person name="Kornhauser J."/>
            <person name="Jia X."/>
            <person name="Ren J."/>
            <person name="Beausoleil S.A."/>
            <person name="Silva J.C."/>
            <person name="Vemulapalli V."/>
            <person name="Bedford M.T."/>
            <person name="Comb M.J."/>
        </authorList>
    </citation>
    <scope>METHYLATION [LARGE SCALE ANALYSIS] AT ARG-12</scope>
    <scope>IDENTIFICATION BY MASS SPECTROMETRY [LARGE SCALE ANALYSIS]</scope>
    <source>
        <tissue>Embryo</tissue>
    </source>
</reference>
<reference evidence="5 6" key="5">
    <citation type="journal article" date="2022" name="Nature">
        <title>A male germ-cell-specific ribosome controls male fertility.</title>
        <authorList>
            <person name="Li H."/>
            <person name="Huo Y."/>
            <person name="He X."/>
            <person name="Yao L."/>
            <person name="Zhang H."/>
            <person name="Cui Y."/>
            <person name="Xiao H."/>
            <person name="Xie W."/>
            <person name="Zhang D."/>
            <person name="Wang Y."/>
            <person name="Zhang S."/>
            <person name="Tu H."/>
            <person name="Cheng Y."/>
            <person name="Guo Y."/>
            <person name="Cao X."/>
            <person name="Zhu Y."/>
            <person name="Jiang T."/>
            <person name="Guo X."/>
            <person name="Qin Y."/>
            <person name="Sha J."/>
        </authorList>
    </citation>
    <scope>STRUCTURE BY ELECTRON MICROSCOPY (3.03 ANGSTROMS) OF RIBOSOME</scope>
    <scope>FUNCTION</scope>
    <scope>SUBUNIT</scope>
    <scope>SUBCELLULAR LOCATION</scope>
</reference>
<accession>P62274</accession>
<accession>P30054</accession>
<name>RS29_MOUSE</name>
<sequence>MGHQQLYWSHPRKFGQGSRSCRVCSNRHGLIRKYGLNMCRQCFRQYAKDIGFIKLD</sequence>